<reference key="1">
    <citation type="journal article" date="2009" name="Nature">
        <title>Evolution of pathogenicity and sexual reproduction in eight Candida genomes.</title>
        <authorList>
            <person name="Butler G."/>
            <person name="Rasmussen M.D."/>
            <person name="Lin M.F."/>
            <person name="Santos M.A.S."/>
            <person name="Sakthikumar S."/>
            <person name="Munro C.A."/>
            <person name="Rheinbay E."/>
            <person name="Grabherr M."/>
            <person name="Forche A."/>
            <person name="Reedy J.L."/>
            <person name="Agrafioti I."/>
            <person name="Arnaud M.B."/>
            <person name="Bates S."/>
            <person name="Brown A.J.P."/>
            <person name="Brunke S."/>
            <person name="Costanzo M.C."/>
            <person name="Fitzpatrick D.A."/>
            <person name="de Groot P.W.J."/>
            <person name="Harris D."/>
            <person name="Hoyer L.L."/>
            <person name="Hube B."/>
            <person name="Klis F.M."/>
            <person name="Kodira C."/>
            <person name="Lennard N."/>
            <person name="Logue M.E."/>
            <person name="Martin R."/>
            <person name="Neiman A.M."/>
            <person name="Nikolaou E."/>
            <person name="Quail M.A."/>
            <person name="Quinn J."/>
            <person name="Santos M.C."/>
            <person name="Schmitzberger F.F."/>
            <person name="Sherlock G."/>
            <person name="Shah P."/>
            <person name="Silverstein K.A.T."/>
            <person name="Skrzypek M.S."/>
            <person name="Soll D."/>
            <person name="Staggs R."/>
            <person name="Stansfield I."/>
            <person name="Stumpf M.P.H."/>
            <person name="Sudbery P.E."/>
            <person name="Srikantha T."/>
            <person name="Zeng Q."/>
            <person name="Berman J."/>
            <person name="Berriman M."/>
            <person name="Heitman J."/>
            <person name="Gow N.A.R."/>
            <person name="Lorenz M.C."/>
            <person name="Birren B.W."/>
            <person name="Kellis M."/>
            <person name="Cuomo C.A."/>
        </authorList>
    </citation>
    <scope>NUCLEOTIDE SEQUENCE [LARGE SCALE GENOMIC DNA]</scope>
    <source>
        <strain>WO-1</strain>
    </source>
</reference>
<sequence length="654" mass="73844">MLLRPNSGNTLKYGCLLTKRWLTTSKLLYSVEDMKIKIGQEQYRKALEERIDKIPIENYRNFSIVAHVDHGKSTLSDRLLEMTGVIKPGSKSQVLDKLDVERERGITVKAQTVSMFYNDGKQDYLLHLVDTPGHVDFRAEVSRSYASCGGALLLVDASQGVQAQTVANFYLAYSMGLKLIPIINKIDLDSANIPGAREQIETTFELDPNECIPVSAKTGLNVEQIIPSVIKNIPSPVCDVNKPLRALLVDSWHDPYVGVVMLVHIVDGRMKKGMKILSAHTNRTYDVKEVGIMYPDRTPTSFIKAGQVAYIIPGMKNPREALVGDTFYQMGKHEGLEPLPGFEEPKPMVFVGAFPADGKEFNAMDDQMQNLVLNDRSVTLEQKTSNALGLGWRLGFLGSLHASVFKERLEKEYGAKIILTAPTVPYKIIYKNGEEKIVTNPDDFPDNQKHHDVESYMEPYVEAIMTVPNEYVGNVMTLCLNNRGEQKEIEYLTTGQVLLKYEIPTSQLVEDFFGKLKGCTKGYASLDYEEAGYRKSDIVKMQLCVNGEPQDALTTVIHRSQAQARGKEYVTRFKKFLSYQLLKVPISLKIIQKVVARETIKAKRKDVTQRLHAADISRYKKLLERQKEGKKQMKLSGRVTIKNDAYQAFLRRED</sequence>
<proteinExistence type="inferred from homology"/>
<comment type="function">
    <text evidence="1">Promotes mitochondrial protein synthesis. May act as a fidelity factor of the translation reaction, by catalyzing a one-codon backward translocation of tRNAs on improperly translocated ribosomes. Binds to mitochondrial ribosomes in a GTP-dependent manner.</text>
</comment>
<comment type="catalytic activity">
    <reaction evidence="1">
        <text>GTP + H2O = GDP + phosphate + H(+)</text>
        <dbReference type="Rhea" id="RHEA:19669"/>
        <dbReference type="ChEBI" id="CHEBI:15377"/>
        <dbReference type="ChEBI" id="CHEBI:15378"/>
        <dbReference type="ChEBI" id="CHEBI:37565"/>
        <dbReference type="ChEBI" id="CHEBI:43474"/>
        <dbReference type="ChEBI" id="CHEBI:58189"/>
    </reaction>
</comment>
<comment type="subcellular location">
    <subcellularLocation>
        <location evidence="1">Mitochondrion inner membrane</location>
        <topology evidence="1">Peripheral membrane protein</topology>
        <orientation evidence="1">Matrix side</orientation>
    </subcellularLocation>
</comment>
<comment type="miscellaneous">
    <text evidence="1">This protein may be expected to contain an N-terminal transit peptide but none has been predicted.</text>
</comment>
<comment type="similarity">
    <text evidence="2">Belongs to the TRAFAC class translation factor GTPase superfamily. Classic translation factor GTPase family. LepA subfamily.</text>
</comment>
<keyword id="KW-0342">GTP-binding</keyword>
<keyword id="KW-0378">Hydrolase</keyword>
<keyword id="KW-0472">Membrane</keyword>
<keyword id="KW-0496">Mitochondrion</keyword>
<keyword id="KW-0999">Mitochondrion inner membrane</keyword>
<keyword id="KW-0547">Nucleotide-binding</keyword>
<keyword id="KW-0648">Protein biosynthesis</keyword>
<feature type="chain" id="PRO_0000402877" description="Translation factor GUF1, mitochondrial">
    <location>
        <begin position="1"/>
        <end position="654"/>
    </location>
</feature>
<feature type="domain" description="tr-type G">
    <location>
        <begin position="57"/>
        <end position="237"/>
    </location>
</feature>
<feature type="binding site" evidence="1">
    <location>
        <begin position="66"/>
        <end position="73"/>
    </location>
    <ligand>
        <name>GTP</name>
        <dbReference type="ChEBI" id="CHEBI:37565"/>
    </ligand>
</feature>
<feature type="binding site" evidence="1">
    <location>
        <begin position="130"/>
        <end position="134"/>
    </location>
    <ligand>
        <name>GTP</name>
        <dbReference type="ChEBI" id="CHEBI:37565"/>
    </ligand>
</feature>
<feature type="binding site" evidence="1">
    <location>
        <begin position="184"/>
        <end position="187"/>
    </location>
    <ligand>
        <name>GTP</name>
        <dbReference type="ChEBI" id="CHEBI:37565"/>
    </ligand>
</feature>
<accession>C4YIT6</accession>
<organism>
    <name type="scientific">Candida albicans (strain WO-1)</name>
    <name type="common">Yeast</name>
    <dbReference type="NCBI Taxonomy" id="294748"/>
    <lineage>
        <taxon>Eukaryota</taxon>
        <taxon>Fungi</taxon>
        <taxon>Dikarya</taxon>
        <taxon>Ascomycota</taxon>
        <taxon>Saccharomycotina</taxon>
        <taxon>Pichiomycetes</taxon>
        <taxon>Debaryomycetaceae</taxon>
        <taxon>Candida/Lodderomyces clade</taxon>
        <taxon>Candida</taxon>
    </lineage>
</organism>
<name>GUF1_CANAW</name>
<protein>
    <recommendedName>
        <fullName evidence="1">Translation factor GUF1, mitochondrial</fullName>
        <ecNumber>3.6.5.-</ecNumber>
    </recommendedName>
    <alternativeName>
        <fullName evidence="1">Elongation factor 4 homolog</fullName>
        <shortName evidence="1">EF-4</shortName>
    </alternativeName>
    <alternativeName>
        <fullName evidence="1">GTPase GUF1</fullName>
    </alternativeName>
    <alternativeName>
        <fullName evidence="1">Ribosomal back-translocase</fullName>
    </alternativeName>
</protein>
<dbReference type="EC" id="3.6.5.-"/>
<dbReference type="EMBL" id="CH672350">
    <property type="protein sequence ID" value="EEQ46021.1"/>
    <property type="molecule type" value="Genomic_DNA"/>
</dbReference>
<dbReference type="SMR" id="C4YIT6"/>
<dbReference type="PaxDb" id="5476-C4YIT6"/>
<dbReference type="VEuPathDB" id="FungiDB:CAWG_04363"/>
<dbReference type="HOGENOM" id="CLU_009995_3_1_1"/>
<dbReference type="OMA" id="QVKCDEN"/>
<dbReference type="OrthoDB" id="5227at766764"/>
<dbReference type="Proteomes" id="UP000001429">
    <property type="component" value="Chromosome 2, Supercontig 1.5"/>
</dbReference>
<dbReference type="GO" id="GO:0005743">
    <property type="term" value="C:mitochondrial inner membrane"/>
    <property type="evidence" value="ECO:0007669"/>
    <property type="project" value="UniProtKB-SubCell"/>
</dbReference>
<dbReference type="GO" id="GO:0005759">
    <property type="term" value="C:mitochondrial matrix"/>
    <property type="evidence" value="ECO:0007669"/>
    <property type="project" value="UniProtKB-UniRule"/>
</dbReference>
<dbReference type="GO" id="GO:0005525">
    <property type="term" value="F:GTP binding"/>
    <property type="evidence" value="ECO:0007669"/>
    <property type="project" value="UniProtKB-UniRule"/>
</dbReference>
<dbReference type="GO" id="GO:0003924">
    <property type="term" value="F:GTPase activity"/>
    <property type="evidence" value="ECO:0007669"/>
    <property type="project" value="UniProtKB-UniRule"/>
</dbReference>
<dbReference type="GO" id="GO:0097177">
    <property type="term" value="F:mitochondrial ribosome binding"/>
    <property type="evidence" value="ECO:0007669"/>
    <property type="project" value="TreeGrafter"/>
</dbReference>
<dbReference type="GO" id="GO:0045727">
    <property type="term" value="P:positive regulation of translation"/>
    <property type="evidence" value="ECO:0007669"/>
    <property type="project" value="UniProtKB-UniRule"/>
</dbReference>
<dbReference type="GO" id="GO:0006412">
    <property type="term" value="P:translation"/>
    <property type="evidence" value="ECO:0007669"/>
    <property type="project" value="UniProtKB-KW"/>
</dbReference>
<dbReference type="CDD" id="cd03699">
    <property type="entry name" value="EF4_II"/>
    <property type="match status" value="1"/>
</dbReference>
<dbReference type="CDD" id="cd16260">
    <property type="entry name" value="EF4_III"/>
    <property type="match status" value="1"/>
</dbReference>
<dbReference type="CDD" id="cd01890">
    <property type="entry name" value="LepA"/>
    <property type="match status" value="1"/>
</dbReference>
<dbReference type="CDD" id="cd03709">
    <property type="entry name" value="lepA_C"/>
    <property type="match status" value="1"/>
</dbReference>
<dbReference type="FunFam" id="3.40.50.300:FF:000078">
    <property type="entry name" value="Elongation factor 4"/>
    <property type="match status" value="1"/>
</dbReference>
<dbReference type="FunFam" id="2.40.30.10:FF:000015">
    <property type="entry name" value="Translation factor GUF1, mitochondrial"/>
    <property type="match status" value="1"/>
</dbReference>
<dbReference type="FunFam" id="3.30.70.240:FF:000007">
    <property type="entry name" value="Translation factor GUF1, mitochondrial"/>
    <property type="match status" value="1"/>
</dbReference>
<dbReference type="FunFam" id="3.30.70.870:FF:000004">
    <property type="entry name" value="Translation factor GUF1, mitochondrial"/>
    <property type="match status" value="1"/>
</dbReference>
<dbReference type="Gene3D" id="3.30.70.240">
    <property type="match status" value="1"/>
</dbReference>
<dbReference type="Gene3D" id="3.30.70.2570">
    <property type="entry name" value="Elongation factor 4, C-terminal domain"/>
    <property type="match status" value="1"/>
</dbReference>
<dbReference type="Gene3D" id="3.30.70.870">
    <property type="entry name" value="Elongation Factor G (Translational Gtpase), domain 3"/>
    <property type="match status" value="1"/>
</dbReference>
<dbReference type="Gene3D" id="3.40.50.300">
    <property type="entry name" value="P-loop containing nucleotide triphosphate hydrolases"/>
    <property type="match status" value="1"/>
</dbReference>
<dbReference type="Gene3D" id="2.40.30.10">
    <property type="entry name" value="Translation factors"/>
    <property type="match status" value="1"/>
</dbReference>
<dbReference type="HAMAP" id="MF_00071">
    <property type="entry name" value="LepA"/>
    <property type="match status" value="1"/>
</dbReference>
<dbReference type="InterPro" id="IPR006297">
    <property type="entry name" value="EF-4"/>
</dbReference>
<dbReference type="InterPro" id="IPR035647">
    <property type="entry name" value="EFG_III/V"/>
</dbReference>
<dbReference type="InterPro" id="IPR000640">
    <property type="entry name" value="EFG_V-like"/>
</dbReference>
<dbReference type="InterPro" id="IPR004161">
    <property type="entry name" value="EFTu-like_2"/>
</dbReference>
<dbReference type="InterPro" id="IPR031157">
    <property type="entry name" value="G_TR_CS"/>
</dbReference>
<dbReference type="InterPro" id="IPR038363">
    <property type="entry name" value="LepA_C_sf"/>
</dbReference>
<dbReference type="InterPro" id="IPR013842">
    <property type="entry name" value="LepA_CTD"/>
</dbReference>
<dbReference type="InterPro" id="IPR035654">
    <property type="entry name" value="LepA_IV"/>
</dbReference>
<dbReference type="InterPro" id="IPR027417">
    <property type="entry name" value="P-loop_NTPase"/>
</dbReference>
<dbReference type="InterPro" id="IPR005225">
    <property type="entry name" value="Small_GTP-bd"/>
</dbReference>
<dbReference type="InterPro" id="IPR000795">
    <property type="entry name" value="T_Tr_GTP-bd_dom"/>
</dbReference>
<dbReference type="InterPro" id="IPR009000">
    <property type="entry name" value="Transl_B-barrel_sf"/>
</dbReference>
<dbReference type="NCBIfam" id="TIGR01393">
    <property type="entry name" value="lepA"/>
    <property type="match status" value="1"/>
</dbReference>
<dbReference type="NCBIfam" id="TIGR00231">
    <property type="entry name" value="small_GTP"/>
    <property type="match status" value="1"/>
</dbReference>
<dbReference type="PANTHER" id="PTHR43512:SF7">
    <property type="entry name" value="TRANSLATION FACTOR GUF1, MITOCHONDRIAL"/>
    <property type="match status" value="1"/>
</dbReference>
<dbReference type="PANTHER" id="PTHR43512">
    <property type="entry name" value="TRANSLATION FACTOR GUF1-RELATED"/>
    <property type="match status" value="1"/>
</dbReference>
<dbReference type="Pfam" id="PF00679">
    <property type="entry name" value="EFG_C"/>
    <property type="match status" value="1"/>
</dbReference>
<dbReference type="Pfam" id="PF00009">
    <property type="entry name" value="GTP_EFTU"/>
    <property type="match status" value="1"/>
</dbReference>
<dbReference type="Pfam" id="PF03144">
    <property type="entry name" value="GTP_EFTU_D2"/>
    <property type="match status" value="1"/>
</dbReference>
<dbReference type="Pfam" id="PF06421">
    <property type="entry name" value="LepA_C"/>
    <property type="match status" value="1"/>
</dbReference>
<dbReference type="PRINTS" id="PR00315">
    <property type="entry name" value="ELONGATNFCT"/>
</dbReference>
<dbReference type="SUPFAM" id="SSF54980">
    <property type="entry name" value="EF-G C-terminal domain-like"/>
    <property type="match status" value="2"/>
</dbReference>
<dbReference type="SUPFAM" id="SSF52540">
    <property type="entry name" value="P-loop containing nucleoside triphosphate hydrolases"/>
    <property type="match status" value="1"/>
</dbReference>
<dbReference type="SUPFAM" id="SSF50447">
    <property type="entry name" value="Translation proteins"/>
    <property type="match status" value="1"/>
</dbReference>
<dbReference type="PROSITE" id="PS00301">
    <property type="entry name" value="G_TR_1"/>
    <property type="match status" value="1"/>
</dbReference>
<dbReference type="PROSITE" id="PS51722">
    <property type="entry name" value="G_TR_2"/>
    <property type="match status" value="1"/>
</dbReference>
<gene>
    <name evidence="1" type="primary">GUF1</name>
    <name type="ORF">CAWG_04363</name>
</gene>
<evidence type="ECO:0000255" key="1">
    <source>
        <dbReference type="HAMAP-Rule" id="MF_03137"/>
    </source>
</evidence>
<evidence type="ECO:0000305" key="2"/>